<dbReference type="EC" id="1.1.1.45" evidence="4"/>
<dbReference type="EMBL" id="AF480862">
    <property type="protein sequence ID" value="AAL88550.1"/>
    <property type="molecule type" value="mRNA"/>
</dbReference>
<dbReference type="RefSeq" id="NP_776718.1">
    <property type="nucleotide sequence ID" value="NM_174293.2"/>
</dbReference>
<dbReference type="SMR" id="Q8SPX7"/>
<dbReference type="FunCoup" id="Q8SPX7">
    <property type="interactions" value="528"/>
</dbReference>
<dbReference type="STRING" id="9913.ENSBTAP00000066198"/>
<dbReference type="PaxDb" id="9913-ENSBTAP00000015575"/>
<dbReference type="Ensembl" id="ENSBTAT00000015575.7">
    <property type="protein sequence ID" value="ENSBTAP00000015575.5"/>
    <property type="gene ID" value="ENSBTAG00000011726.7"/>
</dbReference>
<dbReference type="GeneID" id="281725"/>
<dbReference type="KEGG" id="bta:281725"/>
<dbReference type="CTD" id="51084"/>
<dbReference type="VEuPathDB" id="HostDB:ENSBTAG00000011726"/>
<dbReference type="VGNC" id="VGNC:27744">
    <property type="gene designation" value="CRYL1"/>
</dbReference>
<dbReference type="eggNOG" id="KOG2305">
    <property type="taxonomic scope" value="Eukaryota"/>
</dbReference>
<dbReference type="GeneTree" id="ENSGT00390000007182"/>
<dbReference type="HOGENOM" id="CLU_009834_0_0_1"/>
<dbReference type="InParanoid" id="Q8SPX7"/>
<dbReference type="OMA" id="RDNCLTH"/>
<dbReference type="OrthoDB" id="2021159at2759"/>
<dbReference type="TreeFam" id="TF313501"/>
<dbReference type="Reactome" id="R-BTA-5661270">
    <property type="pathway name" value="Formation of xylulose-5-phosphate"/>
</dbReference>
<dbReference type="Proteomes" id="UP000009136">
    <property type="component" value="Chromosome 12"/>
</dbReference>
<dbReference type="Bgee" id="ENSBTAG00000011726">
    <property type="expression patterns" value="Expressed in rumen papilla and 104 other cell types or tissues"/>
</dbReference>
<dbReference type="GO" id="GO:0005829">
    <property type="term" value="C:cytosol"/>
    <property type="evidence" value="ECO:0000250"/>
    <property type="project" value="UniProtKB"/>
</dbReference>
<dbReference type="GO" id="GO:0050104">
    <property type="term" value="F:L-gulonate 3-dehydrogenase activity"/>
    <property type="evidence" value="ECO:0000250"/>
    <property type="project" value="UniProtKB"/>
</dbReference>
<dbReference type="GO" id="GO:0070403">
    <property type="term" value="F:NAD+ binding"/>
    <property type="evidence" value="ECO:0000250"/>
    <property type="project" value="UniProtKB"/>
</dbReference>
<dbReference type="GO" id="GO:0042803">
    <property type="term" value="F:protein homodimerization activity"/>
    <property type="evidence" value="ECO:0007669"/>
    <property type="project" value="Ensembl"/>
</dbReference>
<dbReference type="GO" id="GO:0019640">
    <property type="term" value="P:D-glucuronate catabolic process to D-xylulose 5-phosphate"/>
    <property type="evidence" value="ECO:0007669"/>
    <property type="project" value="Ensembl"/>
</dbReference>
<dbReference type="GO" id="GO:0006631">
    <property type="term" value="P:fatty acid metabolic process"/>
    <property type="evidence" value="ECO:0007669"/>
    <property type="project" value="InterPro"/>
</dbReference>
<dbReference type="FunFam" id="3.40.50.720:FF:000356">
    <property type="entry name" value="Lambda-crystallin homolog"/>
    <property type="match status" value="1"/>
</dbReference>
<dbReference type="FunFam" id="1.10.1040.10:FF:000023">
    <property type="entry name" value="lambda-crystallin homolog"/>
    <property type="match status" value="1"/>
</dbReference>
<dbReference type="Gene3D" id="1.10.1040.10">
    <property type="entry name" value="N-(1-d-carboxylethyl)-l-norvaline Dehydrogenase, domain 2"/>
    <property type="match status" value="1"/>
</dbReference>
<dbReference type="Gene3D" id="3.40.50.720">
    <property type="entry name" value="NAD(P)-binding Rossmann-like Domain"/>
    <property type="match status" value="1"/>
</dbReference>
<dbReference type="InterPro" id="IPR022694">
    <property type="entry name" value="3-OHacyl-CoA_DH"/>
</dbReference>
<dbReference type="InterPro" id="IPR006180">
    <property type="entry name" value="3-OHacyl-CoA_DH_CS"/>
</dbReference>
<dbReference type="InterPro" id="IPR006176">
    <property type="entry name" value="3-OHacyl-CoA_DH_NAD-bd"/>
</dbReference>
<dbReference type="InterPro" id="IPR006108">
    <property type="entry name" value="3HC_DH_C"/>
</dbReference>
<dbReference type="InterPro" id="IPR008927">
    <property type="entry name" value="6-PGluconate_DH-like_C_sf"/>
</dbReference>
<dbReference type="InterPro" id="IPR013328">
    <property type="entry name" value="6PGD_dom2"/>
</dbReference>
<dbReference type="InterPro" id="IPR036291">
    <property type="entry name" value="NAD(P)-bd_dom_sf"/>
</dbReference>
<dbReference type="PANTHER" id="PTHR48075">
    <property type="entry name" value="3-HYDROXYACYL-COA DEHYDROGENASE FAMILY PROTEIN"/>
    <property type="match status" value="1"/>
</dbReference>
<dbReference type="PANTHER" id="PTHR48075:SF1">
    <property type="entry name" value="LAMBDA-CRYSTALLIN HOMOLOG"/>
    <property type="match status" value="1"/>
</dbReference>
<dbReference type="Pfam" id="PF00725">
    <property type="entry name" value="3HCDH"/>
    <property type="match status" value="1"/>
</dbReference>
<dbReference type="Pfam" id="PF02737">
    <property type="entry name" value="3HCDH_N"/>
    <property type="match status" value="1"/>
</dbReference>
<dbReference type="PIRSF" id="PIRSF000105">
    <property type="entry name" value="HCDH"/>
    <property type="match status" value="1"/>
</dbReference>
<dbReference type="SUPFAM" id="SSF48179">
    <property type="entry name" value="6-phosphogluconate dehydrogenase C-terminal domain-like"/>
    <property type="match status" value="1"/>
</dbReference>
<dbReference type="SUPFAM" id="SSF51735">
    <property type="entry name" value="NAD(P)-binding Rossmann-fold domains"/>
    <property type="match status" value="1"/>
</dbReference>
<dbReference type="PROSITE" id="PS00067">
    <property type="entry name" value="3HCDH"/>
    <property type="match status" value="1"/>
</dbReference>
<keyword id="KW-0963">Cytoplasm</keyword>
<keyword id="KW-0520">NAD</keyword>
<keyword id="KW-0560">Oxidoreductase</keyword>
<keyword id="KW-0597">Phosphoprotein</keyword>
<keyword id="KW-1185">Reference proteome</keyword>
<organism>
    <name type="scientific">Bos taurus</name>
    <name type="common">Bovine</name>
    <dbReference type="NCBI Taxonomy" id="9913"/>
    <lineage>
        <taxon>Eukaryota</taxon>
        <taxon>Metazoa</taxon>
        <taxon>Chordata</taxon>
        <taxon>Craniata</taxon>
        <taxon>Vertebrata</taxon>
        <taxon>Euteleostomi</taxon>
        <taxon>Mammalia</taxon>
        <taxon>Eutheria</taxon>
        <taxon>Laurasiatheria</taxon>
        <taxon>Artiodactyla</taxon>
        <taxon>Ruminantia</taxon>
        <taxon>Pecora</taxon>
        <taxon>Bovidae</taxon>
        <taxon>Bovinae</taxon>
        <taxon>Bos</taxon>
    </lineage>
</organism>
<reference key="1">
    <citation type="journal article" date="2003" name="Gene">
        <title>Human CRYL1, a novel enzyme-crystallin overexpressed in liver and kidney and downregulated in 58% of liver cancer tissues from 60 Chinese patients, and four new homologs from other mammalians.</title>
        <authorList>
            <person name="Chen J."/>
            <person name="Yu L."/>
            <person name="Li D."/>
            <person name="Gao Q."/>
            <person name="Wang J."/>
            <person name="Huang X."/>
            <person name="Bi G."/>
            <person name="Wu H."/>
            <person name="Zhao S."/>
        </authorList>
    </citation>
    <scope>NUCLEOTIDE SEQUENCE [MRNA]</scope>
</reference>
<proteinExistence type="evidence at transcript level"/>
<sequence>MASPGSSAPGGVAVVGSGLIGRSWAMLFASAGFRVKLFDIEPRQVTDALVSLRKEMKMLELSGYLKGELGAEEQLSLISGCSDLREAVEGALHVQECVPENLELKRKLFAQLDKIADDHVILSSSSSCLLPSKLFAGLAHVKQCLVAHPVNPPYYVPLVELVPHPETAPATVDRTYALMRRVGQSPVRLLREIDGFALNRLQYAVIAEAWRLVEEGVVSPGDLDLVMSDGLGLRYAFIGPLETMHLNAEGMLSYCDRYGEGMKRVLKTFGPVPEFSGATAEKVHQAMCVKVPDDAEHLAARRAWRDGCLMRLAQLKHQLPQ</sequence>
<gene>
    <name type="primary">CRYL1</name>
</gene>
<evidence type="ECO:0000250" key="1"/>
<evidence type="ECO:0000250" key="2">
    <source>
        <dbReference type="UniProtKB" id="P14755"/>
    </source>
</evidence>
<evidence type="ECO:0000250" key="3">
    <source>
        <dbReference type="UniProtKB" id="Q811X6"/>
    </source>
</evidence>
<evidence type="ECO:0000250" key="4">
    <source>
        <dbReference type="UniProtKB" id="Q9Y2S2"/>
    </source>
</evidence>
<evidence type="ECO:0000305" key="5"/>
<feature type="chain" id="PRO_0000232505" description="Lambda-crystallin homolog">
    <location>
        <begin position="1"/>
        <end position="321"/>
    </location>
</feature>
<feature type="binding site" evidence="1">
    <location>
        <begin position="19"/>
        <end position="20"/>
    </location>
    <ligand>
        <name>NAD(+)</name>
        <dbReference type="ChEBI" id="CHEBI:57540"/>
    </ligand>
</feature>
<feature type="binding site" evidence="1">
    <location>
        <position position="39"/>
    </location>
    <ligand>
        <name>NAD(+)</name>
        <dbReference type="ChEBI" id="CHEBI:57540"/>
    </ligand>
</feature>
<feature type="binding site" evidence="1">
    <location>
        <position position="100"/>
    </location>
    <ligand>
        <name>NAD(+)</name>
        <dbReference type="ChEBI" id="CHEBI:57540"/>
    </ligand>
</feature>
<feature type="binding site" evidence="1">
    <location>
        <position position="105"/>
    </location>
    <ligand>
        <name>NAD(+)</name>
        <dbReference type="ChEBI" id="CHEBI:57540"/>
    </ligand>
</feature>
<feature type="modified residue" description="Phosphoserine" evidence="3">
    <location>
        <position position="6"/>
    </location>
</feature>
<comment type="function">
    <text evidence="4">Has high L-gulonate 3-dehydrogenase activity. It also exhibits low dehydrogenase activity toward L-3-hydroxybutyrate (HBA) and L-threonate.</text>
</comment>
<comment type="catalytic activity">
    <reaction evidence="4">
        <text>L-gulonate + NAD(+) = 3-dehydro-L-gulonate + NADH + H(+)</text>
        <dbReference type="Rhea" id="RHEA:12889"/>
        <dbReference type="ChEBI" id="CHEBI:13115"/>
        <dbReference type="ChEBI" id="CHEBI:15378"/>
        <dbReference type="ChEBI" id="CHEBI:57540"/>
        <dbReference type="ChEBI" id="CHEBI:57655"/>
        <dbReference type="ChEBI" id="CHEBI:57945"/>
        <dbReference type="EC" id="1.1.1.45"/>
    </reaction>
    <physiologicalReaction direction="left-to-right" evidence="4">
        <dbReference type="Rhea" id="RHEA:12890"/>
    </physiologicalReaction>
</comment>
<comment type="activity regulation">
    <text evidence="4">Inhibited by malonate.</text>
</comment>
<comment type="subunit">
    <text evidence="4">Homodimer.</text>
</comment>
<comment type="subcellular location">
    <subcellularLocation>
        <location evidence="2">Cytoplasm</location>
    </subcellularLocation>
</comment>
<comment type="similarity">
    <text evidence="5">Belongs to the 3-hydroxyacyl-CoA dehydrogenase family.</text>
</comment>
<protein>
    <recommendedName>
        <fullName>Lambda-crystallin homolog</fullName>
        <ecNumber evidence="4">1.1.1.45</ecNumber>
    </recommendedName>
    <alternativeName>
        <fullName>L-gulonate 3-dehydrogenase</fullName>
        <shortName>Gul3DH</shortName>
    </alternativeName>
</protein>
<name>CRYL1_BOVIN</name>
<accession>Q8SPX7</accession>